<keyword id="KW-0131">Cell cycle</keyword>
<keyword id="KW-0132">Cell division</keyword>
<keyword id="KW-0143">Chaperone</keyword>
<keyword id="KW-0963">Cytoplasm</keyword>
<keyword id="KW-0413">Isomerase</keyword>
<keyword id="KW-0697">Rotamase</keyword>
<reference key="1">
    <citation type="journal article" date="2008" name="Proc. Natl. Acad. Sci. U.S.A.">
        <title>The genome sequence of Bifidobacterium longum subsp. infantis reveals adaptations for milk utilization within the infant microbiome.</title>
        <authorList>
            <person name="Sela D.A."/>
            <person name="Chapman J."/>
            <person name="Adeuya A."/>
            <person name="Kim J.H."/>
            <person name="Chen F."/>
            <person name="Whitehead T.R."/>
            <person name="Lapidus A."/>
            <person name="Rokhsar D.S."/>
            <person name="Lebrilla C.B."/>
            <person name="German J.B."/>
            <person name="Price N.P."/>
            <person name="Richardson P.M."/>
            <person name="Mills D.A."/>
        </authorList>
    </citation>
    <scope>NUCLEOTIDE SEQUENCE [LARGE SCALE GENOMIC DNA]</scope>
    <source>
        <strain>ATCC 15697 / DSM 20088 / JCM 1222 / NCTC 11817 / S12</strain>
    </source>
</reference>
<reference key="2">
    <citation type="journal article" date="2011" name="Nature">
        <title>Bifidobacteria can protect from enteropathogenic infection through production of acetate.</title>
        <authorList>
            <person name="Fukuda S."/>
            <person name="Toh H."/>
            <person name="Hase K."/>
            <person name="Oshima K."/>
            <person name="Nakanishi Y."/>
            <person name="Yoshimura K."/>
            <person name="Tobe T."/>
            <person name="Clarke J.M."/>
            <person name="Topping D.L."/>
            <person name="Suzuki T."/>
            <person name="Taylor T.D."/>
            <person name="Itoh K."/>
            <person name="Kikuchi J."/>
            <person name="Morita H."/>
            <person name="Hattori M."/>
            <person name="Ohno H."/>
        </authorList>
    </citation>
    <scope>NUCLEOTIDE SEQUENCE [LARGE SCALE GENOMIC DNA]</scope>
    <source>
        <strain>ATCC 15697 / DSM 20088 / JCM 1222 / NCTC 11817 / S12</strain>
    </source>
</reference>
<accession>B7GSV7</accession>
<accession>E8MLC5</accession>
<organism>
    <name type="scientific">Bifidobacterium longum subsp. infantis (strain ATCC 15697 / DSM 20088 / JCM 1222 / NCTC 11817 / S12)</name>
    <dbReference type="NCBI Taxonomy" id="391904"/>
    <lineage>
        <taxon>Bacteria</taxon>
        <taxon>Bacillati</taxon>
        <taxon>Actinomycetota</taxon>
        <taxon>Actinomycetes</taxon>
        <taxon>Bifidobacteriales</taxon>
        <taxon>Bifidobacteriaceae</taxon>
        <taxon>Bifidobacterium</taxon>
    </lineage>
</organism>
<protein>
    <recommendedName>
        <fullName evidence="1">Trigger factor</fullName>
        <shortName evidence="1">TF</shortName>
        <ecNumber evidence="1">5.2.1.8</ecNumber>
    </recommendedName>
    <alternativeName>
        <fullName evidence="1">PPIase</fullName>
    </alternativeName>
</protein>
<proteinExistence type="inferred from homology"/>
<name>TIG_BIFLS</name>
<feature type="chain" id="PRO_1000198144" description="Trigger factor">
    <location>
        <begin position="1"/>
        <end position="459"/>
    </location>
</feature>
<feature type="domain" description="PPIase FKBP-type" evidence="1">
    <location>
        <begin position="166"/>
        <end position="245"/>
    </location>
</feature>
<dbReference type="EC" id="5.2.1.8" evidence="1"/>
<dbReference type="EMBL" id="CP001095">
    <property type="protein sequence ID" value="ACJ52787.1"/>
    <property type="molecule type" value="Genomic_DNA"/>
</dbReference>
<dbReference type="EMBL" id="AP010889">
    <property type="protein sequence ID" value="BAJ69352.1"/>
    <property type="molecule type" value="Genomic_DNA"/>
</dbReference>
<dbReference type="RefSeq" id="WP_012578011.1">
    <property type="nucleotide sequence ID" value="NC_011593.1"/>
</dbReference>
<dbReference type="SMR" id="B7GSV7"/>
<dbReference type="KEGG" id="bln:Blon_1711"/>
<dbReference type="KEGG" id="blon:BLIJ_1771"/>
<dbReference type="PATRIC" id="fig|391904.8.peg.1780"/>
<dbReference type="HOGENOM" id="CLU_033058_3_0_11"/>
<dbReference type="Proteomes" id="UP000001360">
    <property type="component" value="Chromosome"/>
</dbReference>
<dbReference type="GO" id="GO:0005737">
    <property type="term" value="C:cytoplasm"/>
    <property type="evidence" value="ECO:0007669"/>
    <property type="project" value="UniProtKB-SubCell"/>
</dbReference>
<dbReference type="GO" id="GO:0003755">
    <property type="term" value="F:peptidyl-prolyl cis-trans isomerase activity"/>
    <property type="evidence" value="ECO:0007669"/>
    <property type="project" value="UniProtKB-UniRule"/>
</dbReference>
<dbReference type="GO" id="GO:0044183">
    <property type="term" value="F:protein folding chaperone"/>
    <property type="evidence" value="ECO:0007669"/>
    <property type="project" value="TreeGrafter"/>
</dbReference>
<dbReference type="GO" id="GO:0043022">
    <property type="term" value="F:ribosome binding"/>
    <property type="evidence" value="ECO:0007669"/>
    <property type="project" value="TreeGrafter"/>
</dbReference>
<dbReference type="GO" id="GO:0051083">
    <property type="term" value="P:'de novo' cotranslational protein folding"/>
    <property type="evidence" value="ECO:0007669"/>
    <property type="project" value="TreeGrafter"/>
</dbReference>
<dbReference type="GO" id="GO:0051301">
    <property type="term" value="P:cell division"/>
    <property type="evidence" value="ECO:0007669"/>
    <property type="project" value="UniProtKB-KW"/>
</dbReference>
<dbReference type="GO" id="GO:0061077">
    <property type="term" value="P:chaperone-mediated protein folding"/>
    <property type="evidence" value="ECO:0007669"/>
    <property type="project" value="TreeGrafter"/>
</dbReference>
<dbReference type="GO" id="GO:0015031">
    <property type="term" value="P:protein transport"/>
    <property type="evidence" value="ECO:0007669"/>
    <property type="project" value="UniProtKB-UniRule"/>
</dbReference>
<dbReference type="GO" id="GO:0043335">
    <property type="term" value="P:protein unfolding"/>
    <property type="evidence" value="ECO:0007669"/>
    <property type="project" value="TreeGrafter"/>
</dbReference>
<dbReference type="Gene3D" id="3.10.50.40">
    <property type="match status" value="1"/>
</dbReference>
<dbReference type="Gene3D" id="3.30.70.1050">
    <property type="entry name" value="Trigger factor ribosome-binding domain"/>
    <property type="match status" value="1"/>
</dbReference>
<dbReference type="Gene3D" id="1.10.3120.10">
    <property type="entry name" value="Trigger factor, C-terminal domain"/>
    <property type="match status" value="1"/>
</dbReference>
<dbReference type="HAMAP" id="MF_00303">
    <property type="entry name" value="Trigger_factor_Tig"/>
    <property type="match status" value="1"/>
</dbReference>
<dbReference type="InterPro" id="IPR046357">
    <property type="entry name" value="PPIase_dom_sf"/>
</dbReference>
<dbReference type="InterPro" id="IPR001179">
    <property type="entry name" value="PPIase_FKBP_dom"/>
</dbReference>
<dbReference type="InterPro" id="IPR005215">
    <property type="entry name" value="Trig_fac"/>
</dbReference>
<dbReference type="InterPro" id="IPR008880">
    <property type="entry name" value="Trigger_fac_C"/>
</dbReference>
<dbReference type="InterPro" id="IPR037041">
    <property type="entry name" value="Trigger_fac_C_sf"/>
</dbReference>
<dbReference type="InterPro" id="IPR008881">
    <property type="entry name" value="Trigger_fac_ribosome-bd_bac"/>
</dbReference>
<dbReference type="InterPro" id="IPR036611">
    <property type="entry name" value="Trigger_fac_ribosome-bd_sf"/>
</dbReference>
<dbReference type="InterPro" id="IPR027304">
    <property type="entry name" value="Trigger_fact/SurA_dom_sf"/>
</dbReference>
<dbReference type="NCBIfam" id="TIGR00115">
    <property type="entry name" value="tig"/>
    <property type="match status" value="1"/>
</dbReference>
<dbReference type="PANTHER" id="PTHR30560">
    <property type="entry name" value="TRIGGER FACTOR CHAPERONE AND PEPTIDYL-PROLYL CIS/TRANS ISOMERASE"/>
    <property type="match status" value="1"/>
</dbReference>
<dbReference type="PANTHER" id="PTHR30560:SF3">
    <property type="entry name" value="TRIGGER FACTOR-LIKE PROTEIN TIG, CHLOROPLASTIC"/>
    <property type="match status" value="1"/>
</dbReference>
<dbReference type="Pfam" id="PF00254">
    <property type="entry name" value="FKBP_C"/>
    <property type="match status" value="1"/>
</dbReference>
<dbReference type="Pfam" id="PF05698">
    <property type="entry name" value="Trigger_C"/>
    <property type="match status" value="1"/>
</dbReference>
<dbReference type="Pfam" id="PF05697">
    <property type="entry name" value="Trigger_N"/>
    <property type="match status" value="1"/>
</dbReference>
<dbReference type="PIRSF" id="PIRSF003095">
    <property type="entry name" value="Trigger_factor"/>
    <property type="match status" value="1"/>
</dbReference>
<dbReference type="SUPFAM" id="SSF54534">
    <property type="entry name" value="FKBP-like"/>
    <property type="match status" value="1"/>
</dbReference>
<dbReference type="SUPFAM" id="SSF109998">
    <property type="entry name" value="Triger factor/SurA peptide-binding domain-like"/>
    <property type="match status" value="1"/>
</dbReference>
<dbReference type="SUPFAM" id="SSF102735">
    <property type="entry name" value="Trigger factor ribosome-binding domain"/>
    <property type="match status" value="1"/>
</dbReference>
<dbReference type="PROSITE" id="PS50059">
    <property type="entry name" value="FKBP_PPIASE"/>
    <property type="match status" value="1"/>
</dbReference>
<evidence type="ECO:0000255" key="1">
    <source>
        <dbReference type="HAMAP-Rule" id="MF_00303"/>
    </source>
</evidence>
<comment type="function">
    <text evidence="1">Involved in protein export. Acts as a chaperone by maintaining the newly synthesized protein in an open conformation. Functions as a peptidyl-prolyl cis-trans isomerase.</text>
</comment>
<comment type="catalytic activity">
    <reaction evidence="1">
        <text>[protein]-peptidylproline (omega=180) = [protein]-peptidylproline (omega=0)</text>
        <dbReference type="Rhea" id="RHEA:16237"/>
        <dbReference type="Rhea" id="RHEA-COMP:10747"/>
        <dbReference type="Rhea" id="RHEA-COMP:10748"/>
        <dbReference type="ChEBI" id="CHEBI:83833"/>
        <dbReference type="ChEBI" id="CHEBI:83834"/>
        <dbReference type="EC" id="5.2.1.8"/>
    </reaction>
</comment>
<comment type="subcellular location">
    <subcellularLocation>
        <location>Cytoplasm</location>
    </subcellularLocation>
    <text evidence="1">About half TF is bound to the ribosome near the polypeptide exit tunnel while the other half is free in the cytoplasm.</text>
</comment>
<comment type="domain">
    <text evidence="1">Consists of 3 domains; the N-terminus binds the ribosome, the middle domain has PPIase activity, while the C-terminus has intrinsic chaperone activity on its own.</text>
</comment>
<comment type="similarity">
    <text evidence="1">Belongs to the FKBP-type PPIase family. Tig subfamily.</text>
</comment>
<sequence>MKISVRNLEPTKVKLTVTVEPEELNPYLDAARKEIAKQVNVPGFRKGHVPGKIIDQRIGFAAVAGEAVNDAVPELYSKALDEKKIRPMAQPEFDVQDVPQSANDETKLKFTATVERRPDIELPEIDGLEIAISKPEVKDEDVDKRLETLRQRFGTLVGVDRPAAKGDFANIDLTAEIDGETVDSQEGVSYELGSNTMLDGLDEALDGLSAGEETTFEGTLEAGEHEGQKATVKVKVNSVKAEELPELDDEFASEASEFDTLDELKADIRKAAAQDAEGRQATEARDAFIAKLQEGLEIPVPKGVKANMVEEQLKGLTPDPEKATKEQKAQAEETVEKDLRDQMVLDALAEKLDVQVSQSDVFNFLASIAQQYGMDPNNFIQAIIKNGQLGSAVQEVARSKGLLAGMRAVKFTADGEVVDLSGFLGEAAEDEESESVEAASAAAAVADELSAKDDAKDAE</sequence>
<gene>
    <name evidence="1" type="primary">tig</name>
    <name type="ordered locus">Blon_1711</name>
    <name type="ordered locus">BLIJ_1771</name>
</gene>